<sequence>MKPSIHSLTHQTMQEWVLEQGEKKFRADQIWEWLYRKRVQSFEEMTNLSKDLIAKLNDQFVVNPLKQRIVQESADGTVKYLFELPDGMLIETVLMRQHYGLSVCVTTQVGCNIGCTFCASGLIKKQRDLNNGEIVAQIMLVQKYFDERGQDERVSHIVVMGIGEPFDNYNNVLNFFRTINDDKGMAIGARHITVSTLGLAHKIRDFADEGVQVNLAVSLHAPNNELRSSIMKINRAFPIEKLFAAIEYYIETTNRRVTFEYIMLNEVNDGVEQALELAELLKNIKKLSYVNLISYNPVSEHDQYSRSPKERVLAFYDTLKKKGGNCVVRQEHGTDIDAACGQLRSNTMKRDRQKAVAAVNP</sequence>
<dbReference type="EC" id="2.1.1.192" evidence="1"/>
<dbReference type="EMBL" id="CP000936">
    <property type="protein sequence ID" value="ACA36007.1"/>
    <property type="molecule type" value="Genomic_DNA"/>
</dbReference>
<dbReference type="RefSeq" id="WP_000804654.1">
    <property type="nucleotide sequence ID" value="NC_010380.1"/>
</dbReference>
<dbReference type="SMR" id="B1IAU3"/>
<dbReference type="KEGG" id="spv:SPH_0867"/>
<dbReference type="HOGENOM" id="CLU_029101_0_1_9"/>
<dbReference type="Proteomes" id="UP000002163">
    <property type="component" value="Chromosome"/>
</dbReference>
<dbReference type="GO" id="GO:0005737">
    <property type="term" value="C:cytoplasm"/>
    <property type="evidence" value="ECO:0007669"/>
    <property type="project" value="UniProtKB-SubCell"/>
</dbReference>
<dbReference type="GO" id="GO:0051539">
    <property type="term" value="F:4 iron, 4 sulfur cluster binding"/>
    <property type="evidence" value="ECO:0007669"/>
    <property type="project" value="UniProtKB-UniRule"/>
</dbReference>
<dbReference type="GO" id="GO:0046872">
    <property type="term" value="F:metal ion binding"/>
    <property type="evidence" value="ECO:0007669"/>
    <property type="project" value="UniProtKB-KW"/>
</dbReference>
<dbReference type="GO" id="GO:0070040">
    <property type="term" value="F:rRNA (adenine(2503)-C2-)-methyltransferase activity"/>
    <property type="evidence" value="ECO:0007669"/>
    <property type="project" value="UniProtKB-UniRule"/>
</dbReference>
<dbReference type="GO" id="GO:0019843">
    <property type="term" value="F:rRNA binding"/>
    <property type="evidence" value="ECO:0007669"/>
    <property type="project" value="UniProtKB-UniRule"/>
</dbReference>
<dbReference type="GO" id="GO:0002935">
    <property type="term" value="F:tRNA (adenine(37)-C2)-methyltransferase activity"/>
    <property type="evidence" value="ECO:0007669"/>
    <property type="project" value="UniProtKB-UniRule"/>
</dbReference>
<dbReference type="GO" id="GO:0000049">
    <property type="term" value="F:tRNA binding"/>
    <property type="evidence" value="ECO:0007669"/>
    <property type="project" value="UniProtKB-UniRule"/>
</dbReference>
<dbReference type="GO" id="GO:0070475">
    <property type="term" value="P:rRNA base methylation"/>
    <property type="evidence" value="ECO:0007669"/>
    <property type="project" value="UniProtKB-UniRule"/>
</dbReference>
<dbReference type="GO" id="GO:0030488">
    <property type="term" value="P:tRNA methylation"/>
    <property type="evidence" value="ECO:0007669"/>
    <property type="project" value="UniProtKB-UniRule"/>
</dbReference>
<dbReference type="CDD" id="cd01335">
    <property type="entry name" value="Radical_SAM"/>
    <property type="match status" value="1"/>
</dbReference>
<dbReference type="FunFam" id="1.10.150.530:FF:000002">
    <property type="entry name" value="Probable dual-specificity RNA methyltransferase RlmN"/>
    <property type="match status" value="1"/>
</dbReference>
<dbReference type="FunFam" id="3.20.20.70:FF:000014">
    <property type="entry name" value="Probable dual-specificity RNA methyltransferase RlmN"/>
    <property type="match status" value="1"/>
</dbReference>
<dbReference type="Gene3D" id="1.10.150.530">
    <property type="match status" value="1"/>
</dbReference>
<dbReference type="Gene3D" id="3.20.20.70">
    <property type="entry name" value="Aldolase class I"/>
    <property type="match status" value="1"/>
</dbReference>
<dbReference type="HAMAP" id="MF_01849">
    <property type="entry name" value="RNA_methyltr_RlmN"/>
    <property type="match status" value="1"/>
</dbReference>
<dbReference type="InterPro" id="IPR013785">
    <property type="entry name" value="Aldolase_TIM"/>
</dbReference>
<dbReference type="InterPro" id="IPR040072">
    <property type="entry name" value="Methyltransferase_A"/>
</dbReference>
<dbReference type="InterPro" id="IPR048641">
    <property type="entry name" value="RlmN_N"/>
</dbReference>
<dbReference type="InterPro" id="IPR027492">
    <property type="entry name" value="RNA_MTrfase_RlmN"/>
</dbReference>
<dbReference type="InterPro" id="IPR004383">
    <property type="entry name" value="rRNA_lsu_MTrfase_RlmN/Cfr"/>
</dbReference>
<dbReference type="InterPro" id="IPR007197">
    <property type="entry name" value="rSAM"/>
</dbReference>
<dbReference type="NCBIfam" id="TIGR00048">
    <property type="entry name" value="rRNA_mod_RlmN"/>
    <property type="match status" value="1"/>
</dbReference>
<dbReference type="PANTHER" id="PTHR30544">
    <property type="entry name" value="23S RRNA METHYLTRANSFERASE"/>
    <property type="match status" value="1"/>
</dbReference>
<dbReference type="PANTHER" id="PTHR30544:SF5">
    <property type="entry name" value="RADICAL SAM CORE DOMAIN-CONTAINING PROTEIN"/>
    <property type="match status" value="1"/>
</dbReference>
<dbReference type="Pfam" id="PF04055">
    <property type="entry name" value="Radical_SAM"/>
    <property type="match status" value="1"/>
</dbReference>
<dbReference type="Pfam" id="PF21016">
    <property type="entry name" value="RlmN_N"/>
    <property type="match status" value="1"/>
</dbReference>
<dbReference type="PIRSF" id="PIRSF006004">
    <property type="entry name" value="CHP00048"/>
    <property type="match status" value="1"/>
</dbReference>
<dbReference type="SFLD" id="SFLDF00275">
    <property type="entry name" value="adenosine_C2_methyltransferase"/>
    <property type="match status" value="1"/>
</dbReference>
<dbReference type="SFLD" id="SFLDG01062">
    <property type="entry name" value="methyltransferase_(Class_A)"/>
    <property type="match status" value="1"/>
</dbReference>
<dbReference type="SUPFAM" id="SSF102114">
    <property type="entry name" value="Radical SAM enzymes"/>
    <property type="match status" value="1"/>
</dbReference>
<dbReference type="PROSITE" id="PS51918">
    <property type="entry name" value="RADICAL_SAM"/>
    <property type="match status" value="1"/>
</dbReference>
<proteinExistence type="inferred from homology"/>
<gene>
    <name evidence="1" type="primary">rlmN</name>
    <name type="ordered locus">SPH_0867</name>
</gene>
<feature type="chain" id="PRO_0000350456" description="Probable dual-specificity RNA methyltransferase RlmN">
    <location>
        <begin position="1"/>
        <end position="361"/>
    </location>
</feature>
<feature type="domain" description="Radical SAM core" evidence="2">
    <location>
        <begin position="97"/>
        <end position="329"/>
    </location>
</feature>
<feature type="active site" description="Proton acceptor" evidence="1">
    <location>
        <position position="91"/>
    </location>
</feature>
<feature type="active site" description="S-methylcysteine intermediate" evidence="1">
    <location>
        <position position="340"/>
    </location>
</feature>
<feature type="binding site" evidence="1">
    <location>
        <position position="111"/>
    </location>
    <ligand>
        <name>[4Fe-4S] cluster</name>
        <dbReference type="ChEBI" id="CHEBI:49883"/>
        <note>4Fe-4S-S-AdoMet</note>
    </ligand>
</feature>
<feature type="binding site" evidence="1">
    <location>
        <position position="115"/>
    </location>
    <ligand>
        <name>[4Fe-4S] cluster</name>
        <dbReference type="ChEBI" id="CHEBI:49883"/>
        <note>4Fe-4S-S-AdoMet</note>
    </ligand>
</feature>
<feature type="binding site" evidence="1">
    <location>
        <position position="118"/>
    </location>
    <ligand>
        <name>[4Fe-4S] cluster</name>
        <dbReference type="ChEBI" id="CHEBI:49883"/>
        <note>4Fe-4S-S-AdoMet</note>
    </ligand>
</feature>
<feature type="binding site" evidence="1">
    <location>
        <begin position="163"/>
        <end position="164"/>
    </location>
    <ligand>
        <name>S-adenosyl-L-methionine</name>
        <dbReference type="ChEBI" id="CHEBI:59789"/>
    </ligand>
</feature>
<feature type="binding site" evidence="1">
    <location>
        <position position="195"/>
    </location>
    <ligand>
        <name>S-adenosyl-L-methionine</name>
        <dbReference type="ChEBI" id="CHEBI:59789"/>
    </ligand>
</feature>
<feature type="binding site" evidence="1">
    <location>
        <begin position="218"/>
        <end position="220"/>
    </location>
    <ligand>
        <name>S-adenosyl-L-methionine</name>
        <dbReference type="ChEBI" id="CHEBI:59789"/>
    </ligand>
</feature>
<feature type="binding site" evidence="1">
    <location>
        <position position="296"/>
    </location>
    <ligand>
        <name>S-adenosyl-L-methionine</name>
        <dbReference type="ChEBI" id="CHEBI:59789"/>
    </ligand>
</feature>
<feature type="disulfide bond" description="(transient)" evidence="1">
    <location>
        <begin position="104"/>
        <end position="340"/>
    </location>
</feature>
<keyword id="KW-0004">4Fe-4S</keyword>
<keyword id="KW-0963">Cytoplasm</keyword>
<keyword id="KW-1015">Disulfide bond</keyword>
<keyword id="KW-0408">Iron</keyword>
<keyword id="KW-0411">Iron-sulfur</keyword>
<keyword id="KW-0479">Metal-binding</keyword>
<keyword id="KW-0489">Methyltransferase</keyword>
<keyword id="KW-0698">rRNA processing</keyword>
<keyword id="KW-0949">S-adenosyl-L-methionine</keyword>
<keyword id="KW-0808">Transferase</keyword>
<keyword id="KW-0819">tRNA processing</keyword>
<evidence type="ECO:0000255" key="1">
    <source>
        <dbReference type="HAMAP-Rule" id="MF_01849"/>
    </source>
</evidence>
<evidence type="ECO:0000255" key="2">
    <source>
        <dbReference type="PROSITE-ProRule" id="PRU01266"/>
    </source>
</evidence>
<comment type="function">
    <text evidence="1">Specifically methylates position 2 of adenine 2503 in 23S rRNA and position 2 of adenine 37 in tRNAs.</text>
</comment>
<comment type="catalytic activity">
    <reaction evidence="1">
        <text>adenosine(2503) in 23S rRNA + 2 reduced [2Fe-2S]-[ferredoxin] + 2 S-adenosyl-L-methionine = 2-methyladenosine(2503) in 23S rRNA + 5'-deoxyadenosine + L-methionine + 2 oxidized [2Fe-2S]-[ferredoxin] + S-adenosyl-L-homocysteine</text>
        <dbReference type="Rhea" id="RHEA:42916"/>
        <dbReference type="Rhea" id="RHEA-COMP:10000"/>
        <dbReference type="Rhea" id="RHEA-COMP:10001"/>
        <dbReference type="Rhea" id="RHEA-COMP:10152"/>
        <dbReference type="Rhea" id="RHEA-COMP:10282"/>
        <dbReference type="ChEBI" id="CHEBI:17319"/>
        <dbReference type="ChEBI" id="CHEBI:33737"/>
        <dbReference type="ChEBI" id="CHEBI:33738"/>
        <dbReference type="ChEBI" id="CHEBI:57844"/>
        <dbReference type="ChEBI" id="CHEBI:57856"/>
        <dbReference type="ChEBI" id="CHEBI:59789"/>
        <dbReference type="ChEBI" id="CHEBI:74411"/>
        <dbReference type="ChEBI" id="CHEBI:74497"/>
        <dbReference type="EC" id="2.1.1.192"/>
    </reaction>
</comment>
<comment type="catalytic activity">
    <reaction evidence="1">
        <text>adenosine(37) in tRNA + 2 reduced [2Fe-2S]-[ferredoxin] + 2 S-adenosyl-L-methionine = 2-methyladenosine(37) in tRNA + 5'-deoxyadenosine + L-methionine + 2 oxidized [2Fe-2S]-[ferredoxin] + S-adenosyl-L-homocysteine</text>
        <dbReference type="Rhea" id="RHEA:43332"/>
        <dbReference type="Rhea" id="RHEA-COMP:10000"/>
        <dbReference type="Rhea" id="RHEA-COMP:10001"/>
        <dbReference type="Rhea" id="RHEA-COMP:10162"/>
        <dbReference type="Rhea" id="RHEA-COMP:10485"/>
        <dbReference type="ChEBI" id="CHEBI:17319"/>
        <dbReference type="ChEBI" id="CHEBI:33737"/>
        <dbReference type="ChEBI" id="CHEBI:33738"/>
        <dbReference type="ChEBI" id="CHEBI:57844"/>
        <dbReference type="ChEBI" id="CHEBI:57856"/>
        <dbReference type="ChEBI" id="CHEBI:59789"/>
        <dbReference type="ChEBI" id="CHEBI:74411"/>
        <dbReference type="ChEBI" id="CHEBI:74497"/>
        <dbReference type="EC" id="2.1.1.192"/>
    </reaction>
</comment>
<comment type="cofactor">
    <cofactor evidence="1">
        <name>[4Fe-4S] cluster</name>
        <dbReference type="ChEBI" id="CHEBI:49883"/>
    </cofactor>
    <text evidence="1">Binds 1 [4Fe-4S] cluster. The cluster is coordinated with 3 cysteines and an exchangeable S-adenosyl-L-methionine.</text>
</comment>
<comment type="subcellular location">
    <subcellularLocation>
        <location evidence="1">Cytoplasm</location>
    </subcellularLocation>
</comment>
<comment type="miscellaneous">
    <text evidence="1">Reaction proceeds by a ping-pong mechanism involving intermediate methylation of a conserved cysteine residue.</text>
</comment>
<comment type="similarity">
    <text evidence="1">Belongs to the radical SAM superfamily. RlmN family.</text>
</comment>
<accession>B1IAU3</accession>
<reference key="1">
    <citation type="journal article" date="2010" name="Genome Biol.">
        <title>Structure and dynamics of the pan-genome of Streptococcus pneumoniae and closely related species.</title>
        <authorList>
            <person name="Donati C."/>
            <person name="Hiller N.L."/>
            <person name="Tettelin H."/>
            <person name="Muzzi A."/>
            <person name="Croucher N.J."/>
            <person name="Angiuoli S.V."/>
            <person name="Oggioni M."/>
            <person name="Dunning Hotopp J.C."/>
            <person name="Hu F.Z."/>
            <person name="Riley D.R."/>
            <person name="Covacci A."/>
            <person name="Mitchell T.J."/>
            <person name="Bentley S.D."/>
            <person name="Kilian M."/>
            <person name="Ehrlich G.D."/>
            <person name="Rappuoli R."/>
            <person name="Moxon E.R."/>
            <person name="Masignani V."/>
        </authorList>
    </citation>
    <scope>NUCLEOTIDE SEQUENCE [LARGE SCALE GENOMIC DNA]</scope>
    <source>
        <strain>Hungary19A-6</strain>
    </source>
</reference>
<organism>
    <name type="scientific">Streptococcus pneumoniae (strain Hungary19A-6)</name>
    <dbReference type="NCBI Taxonomy" id="487214"/>
    <lineage>
        <taxon>Bacteria</taxon>
        <taxon>Bacillati</taxon>
        <taxon>Bacillota</taxon>
        <taxon>Bacilli</taxon>
        <taxon>Lactobacillales</taxon>
        <taxon>Streptococcaceae</taxon>
        <taxon>Streptococcus</taxon>
    </lineage>
</organism>
<name>RLMN_STRPI</name>
<protein>
    <recommendedName>
        <fullName evidence="1">Probable dual-specificity RNA methyltransferase RlmN</fullName>
        <ecNumber evidence="1">2.1.1.192</ecNumber>
    </recommendedName>
    <alternativeName>
        <fullName evidence="1">23S rRNA (adenine(2503)-C(2))-methyltransferase</fullName>
    </alternativeName>
    <alternativeName>
        <fullName evidence="1">23S rRNA m2A2503 methyltransferase</fullName>
    </alternativeName>
    <alternativeName>
        <fullName evidence="1">Ribosomal RNA large subunit methyltransferase N</fullName>
    </alternativeName>
    <alternativeName>
        <fullName evidence="1">tRNA (adenine(37)-C(2))-methyltransferase</fullName>
    </alternativeName>
    <alternativeName>
        <fullName evidence="1">tRNA m2A37 methyltransferase</fullName>
    </alternativeName>
</protein>